<name>GPR17_MOUSE</name>
<dbReference type="EMBL" id="BC070439">
    <property type="protein sequence ID" value="AAH70439.1"/>
    <property type="molecule type" value="mRNA"/>
</dbReference>
<dbReference type="EMBL" id="AY255543">
    <property type="protein sequence ID" value="AAO85055.1"/>
    <property type="molecule type" value="mRNA"/>
</dbReference>
<dbReference type="CCDS" id="CCDS29114.1"/>
<dbReference type="RefSeq" id="NP_001020552.1">
    <property type="nucleotide sequence ID" value="NM_001025381.2"/>
</dbReference>
<dbReference type="SMR" id="Q6NS65"/>
<dbReference type="BioGRID" id="300034">
    <property type="interactions" value="1"/>
</dbReference>
<dbReference type="DIP" id="DIP-48915N"/>
<dbReference type="FunCoup" id="Q6NS65">
    <property type="interactions" value="166"/>
</dbReference>
<dbReference type="IntAct" id="Q6NS65">
    <property type="interactions" value="1"/>
</dbReference>
<dbReference type="STRING" id="10090.ENSMUSP00000063670"/>
<dbReference type="BindingDB" id="Q6NS65"/>
<dbReference type="ChEMBL" id="CHEMBL4295864"/>
<dbReference type="DrugCentral" id="Q6NS65"/>
<dbReference type="GuidetoPHARMACOLOGY" id="88"/>
<dbReference type="GlyCosmos" id="Q6NS65">
    <property type="glycosylation" value="2 sites, No reported glycans"/>
</dbReference>
<dbReference type="GlyGen" id="Q6NS65">
    <property type="glycosylation" value="2 sites"/>
</dbReference>
<dbReference type="iPTMnet" id="Q6NS65"/>
<dbReference type="PhosphoSitePlus" id="Q6NS65"/>
<dbReference type="SwissPalm" id="Q6NS65"/>
<dbReference type="PaxDb" id="10090-ENSMUSP00000063670"/>
<dbReference type="PeptideAtlas" id="Q6NS65"/>
<dbReference type="ProteomicsDB" id="271269"/>
<dbReference type="Antibodypedia" id="18483">
    <property type="antibodies" value="435 antibodies from 35 providers"/>
</dbReference>
<dbReference type="DNASU" id="574402"/>
<dbReference type="Ensembl" id="ENSMUST00000064016.6">
    <property type="protein sequence ID" value="ENSMUSP00000063670.6"/>
    <property type="gene ID" value="ENSMUSG00000052229.6"/>
</dbReference>
<dbReference type="GeneID" id="574402"/>
<dbReference type="KEGG" id="mmu:574402"/>
<dbReference type="UCSC" id="uc008eiw.2">
    <property type="organism name" value="mouse"/>
</dbReference>
<dbReference type="AGR" id="MGI:3584514"/>
<dbReference type="CTD" id="2840"/>
<dbReference type="MGI" id="MGI:3584514">
    <property type="gene designation" value="Gpr17"/>
</dbReference>
<dbReference type="VEuPathDB" id="HostDB:ENSMUSG00000052229"/>
<dbReference type="eggNOG" id="ENOG502QW6S">
    <property type="taxonomic scope" value="Eukaryota"/>
</dbReference>
<dbReference type="GeneTree" id="ENSGT01130000278275"/>
<dbReference type="HOGENOM" id="CLU_009579_8_2_1"/>
<dbReference type="InParanoid" id="Q6NS65"/>
<dbReference type="OMA" id="TCLNGAM"/>
<dbReference type="OrthoDB" id="6503655at2759"/>
<dbReference type="PhylomeDB" id="Q6NS65"/>
<dbReference type="TreeFam" id="TF330775"/>
<dbReference type="Reactome" id="R-MMU-391906">
    <property type="pathway name" value="Leukotriene receptors"/>
</dbReference>
<dbReference type="Reactome" id="R-MMU-416476">
    <property type="pathway name" value="G alpha (q) signalling events"/>
</dbReference>
<dbReference type="Reactome" id="R-MMU-417957">
    <property type="pathway name" value="P2Y receptors"/>
</dbReference>
<dbReference type="Reactome" id="R-MMU-418594">
    <property type="pathway name" value="G alpha (i) signalling events"/>
</dbReference>
<dbReference type="BioGRID-ORCS" id="574402">
    <property type="hits" value="4 hits in 77 CRISPR screens"/>
</dbReference>
<dbReference type="PRO" id="PR:Q6NS65"/>
<dbReference type="Proteomes" id="UP000000589">
    <property type="component" value="Chromosome 18"/>
</dbReference>
<dbReference type="RNAct" id="Q6NS65">
    <property type="molecule type" value="protein"/>
</dbReference>
<dbReference type="Bgee" id="ENSMUSG00000052229">
    <property type="expression patterns" value="Expressed in lumbar subsegment of spinal cord and 90 other cell types or tissues"/>
</dbReference>
<dbReference type="GO" id="GO:0005886">
    <property type="term" value="C:plasma membrane"/>
    <property type="evidence" value="ECO:0007669"/>
    <property type="project" value="UniProtKB-SubCell"/>
</dbReference>
<dbReference type="GO" id="GO:0004930">
    <property type="term" value="F:G protein-coupled receptor activity"/>
    <property type="evidence" value="ECO:0007669"/>
    <property type="project" value="UniProtKB-KW"/>
</dbReference>
<dbReference type="GO" id="GO:0033612">
    <property type="term" value="F:receptor serine/threonine kinase binding"/>
    <property type="evidence" value="ECO:0007669"/>
    <property type="project" value="Ensembl"/>
</dbReference>
<dbReference type="GO" id="GO:0002862">
    <property type="term" value="P:negative regulation of inflammatory response to antigenic stimulus"/>
    <property type="evidence" value="ECO:0000315"/>
    <property type="project" value="MGI"/>
</dbReference>
<dbReference type="GO" id="GO:0048709">
    <property type="term" value="P:oligodendrocyte differentiation"/>
    <property type="evidence" value="ECO:0007669"/>
    <property type="project" value="Ensembl"/>
</dbReference>
<dbReference type="CDD" id="cd15161">
    <property type="entry name" value="7tmA_GPR17"/>
    <property type="match status" value="1"/>
</dbReference>
<dbReference type="FunFam" id="1.20.1070.10:FF:000152">
    <property type="entry name" value="uracil nucleotide/cysteinyl leukotriene receptor"/>
    <property type="match status" value="1"/>
</dbReference>
<dbReference type="Gene3D" id="1.20.1070.10">
    <property type="entry name" value="Rhodopsin 7-helix transmembrane proteins"/>
    <property type="match status" value="1"/>
</dbReference>
<dbReference type="InterPro" id="IPR000276">
    <property type="entry name" value="GPCR_Rhodpsn"/>
</dbReference>
<dbReference type="InterPro" id="IPR017452">
    <property type="entry name" value="GPCR_Rhodpsn_7TM"/>
</dbReference>
<dbReference type="PANTHER" id="PTHR24232">
    <property type="entry name" value="G-PROTEIN COUPLED RECEPTOR"/>
    <property type="match status" value="1"/>
</dbReference>
<dbReference type="PANTHER" id="PTHR24232:SF44">
    <property type="entry name" value="URACIL NUCLEOTIDE_CYSTEINYL LEUKOTRIENE RECEPTOR"/>
    <property type="match status" value="1"/>
</dbReference>
<dbReference type="Pfam" id="PF00001">
    <property type="entry name" value="7tm_1"/>
    <property type="match status" value="1"/>
</dbReference>
<dbReference type="PRINTS" id="PR00237">
    <property type="entry name" value="GPCRRHODOPSN"/>
</dbReference>
<dbReference type="PRINTS" id="PR01157">
    <property type="entry name" value="P2YPURNOCPTR"/>
</dbReference>
<dbReference type="SUPFAM" id="SSF81321">
    <property type="entry name" value="Family A G protein-coupled receptor-like"/>
    <property type="match status" value="1"/>
</dbReference>
<dbReference type="PROSITE" id="PS00237">
    <property type="entry name" value="G_PROTEIN_RECEP_F1_1"/>
    <property type="match status" value="1"/>
</dbReference>
<dbReference type="PROSITE" id="PS50262">
    <property type="entry name" value="G_PROTEIN_RECEP_F1_2"/>
    <property type="match status" value="1"/>
</dbReference>
<gene>
    <name evidence="7" type="primary">Gpr17</name>
</gene>
<organism>
    <name type="scientific">Mus musculus</name>
    <name type="common">Mouse</name>
    <dbReference type="NCBI Taxonomy" id="10090"/>
    <lineage>
        <taxon>Eukaryota</taxon>
        <taxon>Metazoa</taxon>
        <taxon>Chordata</taxon>
        <taxon>Craniata</taxon>
        <taxon>Vertebrata</taxon>
        <taxon>Euteleostomi</taxon>
        <taxon>Mammalia</taxon>
        <taxon>Eutheria</taxon>
        <taxon>Euarchontoglires</taxon>
        <taxon>Glires</taxon>
        <taxon>Rodentia</taxon>
        <taxon>Myomorpha</taxon>
        <taxon>Muroidea</taxon>
        <taxon>Muridae</taxon>
        <taxon>Murinae</taxon>
        <taxon>Mus</taxon>
        <taxon>Mus</taxon>
    </lineage>
</organism>
<sequence length="339" mass="37839">MNGLEAALPSLTDNSSLAYSEQCGQETPLENMLFACFYLLDFILAFVGNALALWLFIWDHKSGTPANVFLMHLAVADLSCVLVLPTRLVYHFSGNHWPFGEIPCRLTGFLFYLNMYASIYFLTCISADRFLAIVHPVKSLKLRRPLYAHLACAFLWIVVAVAMAPLLVSPQTVQTNHTVVCLQLYREKASHHALASLAVAFTFPFITTVTCYLLIIRSLRQGPRIEKHLKNKAVRMIAMVLAIFLICFVPYHIHRSVYVLHYRGGGTSCAAQRALALGNRITSCLTSLNGALDPVMYFFVAEKFRHALCNLLCSKRLTGPPPSFEGKTNESSLSARSEL</sequence>
<reference evidence="5" key="1">
    <citation type="journal article" date="2004" name="Genome Res.">
        <title>The status, quality, and expansion of the NIH full-length cDNA project: the Mammalian Gene Collection (MGC).</title>
        <authorList>
            <consortium name="The MGC Project Team"/>
        </authorList>
    </citation>
    <scope>NUCLEOTIDE SEQUENCE [LARGE SCALE MRNA]</scope>
    <source>
        <strain evidence="5">C57BL/6J</strain>
        <tissue evidence="5">Brain</tissue>
    </source>
</reference>
<reference evidence="6" key="2">
    <citation type="journal article" date="2003" name="Proc. Natl. Acad. Sci. U.S.A.">
        <title>The G protein-coupled receptor repertoires of human and mouse.</title>
        <authorList>
            <person name="Vassilatis D.K."/>
            <person name="Hohmann J.G."/>
            <person name="Zeng H."/>
            <person name="Li F."/>
            <person name="Ranchalis J.E."/>
            <person name="Mortrud M.T."/>
            <person name="Brown A."/>
            <person name="Rodriguez S.S."/>
            <person name="Weller J.R."/>
            <person name="Wright A.C."/>
            <person name="Bergmann J.E."/>
            <person name="Gaitanaris G.A."/>
        </authorList>
    </citation>
    <scope>NUCLEOTIDE SEQUENCE [MRNA] OF 132-308</scope>
</reference>
<feature type="chain" id="PRO_0000278171" description="Uracil nucleotide/cysteinyl leukotriene receptor">
    <location>
        <begin position="1"/>
        <end position="339"/>
    </location>
</feature>
<feature type="topological domain" description="Extracellular" evidence="2">
    <location>
        <begin position="1"/>
        <end position="36"/>
    </location>
</feature>
<feature type="transmembrane region" description="Helical; Name=1" evidence="2">
    <location>
        <begin position="37"/>
        <end position="57"/>
    </location>
</feature>
<feature type="topological domain" description="Cytoplasmic" evidence="2">
    <location>
        <begin position="58"/>
        <end position="64"/>
    </location>
</feature>
<feature type="transmembrane region" description="Helical; Name=2" evidence="2">
    <location>
        <begin position="65"/>
        <end position="85"/>
    </location>
</feature>
<feature type="topological domain" description="Extracellular" evidence="2">
    <location>
        <begin position="86"/>
        <end position="105"/>
    </location>
</feature>
<feature type="transmembrane region" description="Helical; Name=3" evidence="2">
    <location>
        <begin position="106"/>
        <end position="126"/>
    </location>
</feature>
<feature type="topological domain" description="Cytoplasmic" evidence="2">
    <location>
        <begin position="127"/>
        <end position="147"/>
    </location>
</feature>
<feature type="transmembrane region" description="Helical; Name=4" evidence="2">
    <location>
        <begin position="148"/>
        <end position="168"/>
    </location>
</feature>
<feature type="topological domain" description="Extracellular" evidence="2">
    <location>
        <begin position="169"/>
        <end position="195"/>
    </location>
</feature>
<feature type="transmembrane region" description="Helical; Name=5" evidence="2">
    <location>
        <begin position="196"/>
        <end position="216"/>
    </location>
</feature>
<feature type="topological domain" description="Cytoplasmic" evidence="2">
    <location>
        <begin position="217"/>
        <end position="232"/>
    </location>
</feature>
<feature type="transmembrane region" description="Helical; Name=6" evidence="2">
    <location>
        <begin position="233"/>
        <end position="253"/>
    </location>
</feature>
<feature type="topological domain" description="Extracellular" evidence="2">
    <location>
        <begin position="254"/>
        <end position="280"/>
    </location>
</feature>
<feature type="transmembrane region" description="Helical; Name=7" evidence="2">
    <location>
        <begin position="281"/>
        <end position="301"/>
    </location>
</feature>
<feature type="topological domain" description="Cytoplasmic" evidence="2">
    <location>
        <begin position="302"/>
        <end position="339"/>
    </location>
</feature>
<feature type="glycosylation site" description="N-linked (GlcNAc...) asparagine" evidence="2">
    <location>
        <position position="14"/>
    </location>
</feature>
<feature type="glycosylation site" description="N-linked (GlcNAc...) asparagine" evidence="2">
    <location>
        <position position="176"/>
    </location>
</feature>
<feature type="disulfide bond" evidence="3">
    <location>
        <begin position="104"/>
        <end position="181"/>
    </location>
</feature>
<protein>
    <recommendedName>
        <fullName>Uracil nucleotide/cysteinyl leukotriene receptor</fullName>
        <shortName>UDP/CysLT receptor</shortName>
    </recommendedName>
    <alternativeName>
        <fullName>G-protein coupled receptor 17</fullName>
    </alternativeName>
</protein>
<evidence type="ECO:0000250" key="1"/>
<evidence type="ECO:0000255" key="2"/>
<evidence type="ECO:0000255" key="3">
    <source>
        <dbReference type="PROSITE-ProRule" id="PRU00521"/>
    </source>
</evidence>
<evidence type="ECO:0000305" key="4"/>
<evidence type="ECO:0000312" key="5">
    <source>
        <dbReference type="EMBL" id="AAH70439.1"/>
    </source>
</evidence>
<evidence type="ECO:0000312" key="6">
    <source>
        <dbReference type="EMBL" id="AAO85055.1"/>
    </source>
</evidence>
<evidence type="ECO:0000312" key="7">
    <source>
        <dbReference type="MGI" id="MGI:3584514"/>
    </source>
</evidence>
<keyword id="KW-1003">Cell membrane</keyword>
<keyword id="KW-1015">Disulfide bond</keyword>
<keyword id="KW-0297">G-protein coupled receptor</keyword>
<keyword id="KW-0325">Glycoprotein</keyword>
<keyword id="KW-0472">Membrane</keyword>
<keyword id="KW-0675">Receptor</keyword>
<keyword id="KW-1185">Reference proteome</keyword>
<keyword id="KW-0807">Transducer</keyword>
<keyword id="KW-0812">Transmembrane</keyword>
<keyword id="KW-1133">Transmembrane helix</keyword>
<comment type="function">
    <text evidence="1">Dual specificity receptor for uracil nucleotides and cysteinyl leukotrienes (CysLTs). Signals through G(i) and inhibition of adenylyl cyclase. May mediate brain damage by nucleotides and CysLTs following ischemia (By similarity).</text>
</comment>
<comment type="interaction">
    <interactant intactId="EBI-15791369">
        <id>Q6NS65</id>
    </interactant>
    <interactant intactId="EBI-15791392">
        <id>Q99JA4</id>
        <label>Cysltr1</label>
    </interactant>
    <organismsDiffer>false</organismsDiffer>
    <experiments>2</experiments>
</comment>
<comment type="subcellular location">
    <subcellularLocation>
        <location>Cell membrane</location>
        <topology evidence="4">Multi-pass membrane protein</topology>
    </subcellularLocation>
</comment>
<comment type="similarity">
    <text evidence="3">Belongs to the G-protein coupled receptor 1 family.</text>
</comment>
<proteinExistence type="evidence at protein level"/>
<accession>Q6NS65</accession>
<accession>Q80UD2</accession>